<organism>
    <name type="scientific">Maricaulis maris (strain MCS10)</name>
    <name type="common">Caulobacter maris</name>
    <dbReference type="NCBI Taxonomy" id="394221"/>
    <lineage>
        <taxon>Bacteria</taxon>
        <taxon>Pseudomonadati</taxon>
        <taxon>Pseudomonadota</taxon>
        <taxon>Alphaproteobacteria</taxon>
        <taxon>Maricaulales</taxon>
        <taxon>Maricaulaceae</taxon>
        <taxon>Maricaulis</taxon>
    </lineage>
</organism>
<reference key="1">
    <citation type="submission" date="2006-08" db="EMBL/GenBank/DDBJ databases">
        <title>Complete sequence of Maricaulis maris MCS10.</title>
        <authorList>
            <consortium name="US DOE Joint Genome Institute"/>
            <person name="Copeland A."/>
            <person name="Lucas S."/>
            <person name="Lapidus A."/>
            <person name="Barry K."/>
            <person name="Detter J.C."/>
            <person name="Glavina del Rio T."/>
            <person name="Hammon N."/>
            <person name="Israni S."/>
            <person name="Dalin E."/>
            <person name="Tice H."/>
            <person name="Pitluck S."/>
            <person name="Saunders E."/>
            <person name="Brettin T."/>
            <person name="Bruce D."/>
            <person name="Han C."/>
            <person name="Tapia R."/>
            <person name="Gilna P."/>
            <person name="Schmutz J."/>
            <person name="Larimer F."/>
            <person name="Land M."/>
            <person name="Hauser L."/>
            <person name="Kyrpides N."/>
            <person name="Mikhailova N."/>
            <person name="Viollier P."/>
            <person name="Stephens C."/>
            <person name="Richardson P."/>
        </authorList>
    </citation>
    <scope>NUCLEOTIDE SEQUENCE [LARGE SCALE GENOMIC DNA]</scope>
    <source>
        <strain>MCS10</strain>
    </source>
</reference>
<accession>Q0ALX7</accession>
<evidence type="ECO:0000255" key="1">
    <source>
        <dbReference type="HAMAP-Rule" id="MF_00034"/>
    </source>
</evidence>
<proteinExistence type="inferred from homology"/>
<comment type="function">
    <text evidence="1">The RuvA-RuvB-RuvC complex processes Holliday junction (HJ) DNA during genetic recombination and DNA repair. Endonuclease that resolves HJ intermediates. Cleaves cruciform DNA by making single-stranded nicks across the HJ at symmetrical positions within the homologous arms, yielding a 5'-phosphate and a 3'-hydroxyl group; requires a central core of homology in the junction. The consensus cleavage sequence is 5'-(A/T)TT(C/G)-3'. Cleavage occurs on the 3'-side of the TT dinucleotide at the point of strand exchange. HJ branch migration catalyzed by RuvA-RuvB allows RuvC to scan DNA until it finds its consensus sequence, where it cleaves and resolves the cruciform DNA.</text>
</comment>
<comment type="catalytic activity">
    <reaction evidence="1">
        <text>Endonucleolytic cleavage at a junction such as a reciprocal single-stranded crossover between two homologous DNA duplexes (Holliday junction).</text>
        <dbReference type="EC" id="3.1.21.10"/>
    </reaction>
</comment>
<comment type="cofactor">
    <cofactor evidence="1">
        <name>Mg(2+)</name>
        <dbReference type="ChEBI" id="CHEBI:18420"/>
    </cofactor>
    <text evidence="1">Binds 2 Mg(2+) ion per subunit.</text>
</comment>
<comment type="subunit">
    <text evidence="1">Homodimer which binds Holliday junction (HJ) DNA. The HJ becomes 2-fold symmetrical on binding to RuvC with unstacked arms; it has a different conformation from HJ DNA in complex with RuvA. In the full resolvosome a probable DNA-RuvA(4)-RuvB(12)-RuvC(2) complex forms which resolves the HJ.</text>
</comment>
<comment type="subcellular location">
    <subcellularLocation>
        <location evidence="1">Cytoplasm</location>
    </subcellularLocation>
</comment>
<comment type="similarity">
    <text evidence="1">Belongs to the RuvC family.</text>
</comment>
<protein>
    <recommendedName>
        <fullName evidence="1">Crossover junction endodeoxyribonuclease RuvC</fullName>
        <ecNumber evidence="1">3.1.21.10</ecNumber>
    </recommendedName>
    <alternativeName>
        <fullName evidence="1">Holliday junction nuclease RuvC</fullName>
    </alternativeName>
    <alternativeName>
        <fullName evidence="1">Holliday junction resolvase RuvC</fullName>
    </alternativeName>
</protein>
<name>RUVC_MARMM</name>
<dbReference type="EC" id="3.1.21.10" evidence="1"/>
<dbReference type="EMBL" id="CP000449">
    <property type="protein sequence ID" value="ABI66716.1"/>
    <property type="molecule type" value="Genomic_DNA"/>
</dbReference>
<dbReference type="RefSeq" id="WP_011644361.1">
    <property type="nucleotide sequence ID" value="NC_008347.1"/>
</dbReference>
<dbReference type="SMR" id="Q0ALX7"/>
<dbReference type="STRING" id="394221.Mmar10_2424"/>
<dbReference type="KEGG" id="mmr:Mmar10_2424"/>
<dbReference type="eggNOG" id="COG0817">
    <property type="taxonomic scope" value="Bacteria"/>
</dbReference>
<dbReference type="HOGENOM" id="CLU_091257_1_0_5"/>
<dbReference type="OrthoDB" id="9805499at2"/>
<dbReference type="Proteomes" id="UP000001964">
    <property type="component" value="Chromosome"/>
</dbReference>
<dbReference type="GO" id="GO:0005737">
    <property type="term" value="C:cytoplasm"/>
    <property type="evidence" value="ECO:0007669"/>
    <property type="project" value="UniProtKB-SubCell"/>
</dbReference>
<dbReference type="GO" id="GO:0048476">
    <property type="term" value="C:Holliday junction resolvase complex"/>
    <property type="evidence" value="ECO:0007669"/>
    <property type="project" value="UniProtKB-UniRule"/>
</dbReference>
<dbReference type="GO" id="GO:0008821">
    <property type="term" value="F:crossover junction DNA endonuclease activity"/>
    <property type="evidence" value="ECO:0007669"/>
    <property type="project" value="UniProtKB-UniRule"/>
</dbReference>
<dbReference type="GO" id="GO:0003677">
    <property type="term" value="F:DNA binding"/>
    <property type="evidence" value="ECO:0007669"/>
    <property type="project" value="UniProtKB-KW"/>
</dbReference>
<dbReference type="GO" id="GO:0000287">
    <property type="term" value="F:magnesium ion binding"/>
    <property type="evidence" value="ECO:0007669"/>
    <property type="project" value="UniProtKB-UniRule"/>
</dbReference>
<dbReference type="GO" id="GO:0006310">
    <property type="term" value="P:DNA recombination"/>
    <property type="evidence" value="ECO:0007669"/>
    <property type="project" value="UniProtKB-UniRule"/>
</dbReference>
<dbReference type="GO" id="GO:0006281">
    <property type="term" value="P:DNA repair"/>
    <property type="evidence" value="ECO:0007669"/>
    <property type="project" value="UniProtKB-UniRule"/>
</dbReference>
<dbReference type="CDD" id="cd16962">
    <property type="entry name" value="RuvC"/>
    <property type="match status" value="1"/>
</dbReference>
<dbReference type="FunFam" id="3.30.420.10:FF:000002">
    <property type="entry name" value="Crossover junction endodeoxyribonuclease RuvC"/>
    <property type="match status" value="1"/>
</dbReference>
<dbReference type="Gene3D" id="3.30.420.10">
    <property type="entry name" value="Ribonuclease H-like superfamily/Ribonuclease H"/>
    <property type="match status" value="1"/>
</dbReference>
<dbReference type="HAMAP" id="MF_00034">
    <property type="entry name" value="RuvC"/>
    <property type="match status" value="1"/>
</dbReference>
<dbReference type="InterPro" id="IPR012337">
    <property type="entry name" value="RNaseH-like_sf"/>
</dbReference>
<dbReference type="InterPro" id="IPR036397">
    <property type="entry name" value="RNaseH_sf"/>
</dbReference>
<dbReference type="InterPro" id="IPR002176">
    <property type="entry name" value="X-over_junc_endoDNase_RuvC"/>
</dbReference>
<dbReference type="NCBIfam" id="TIGR00228">
    <property type="entry name" value="ruvC"/>
    <property type="match status" value="1"/>
</dbReference>
<dbReference type="PANTHER" id="PTHR30194">
    <property type="entry name" value="CROSSOVER JUNCTION ENDODEOXYRIBONUCLEASE RUVC"/>
    <property type="match status" value="1"/>
</dbReference>
<dbReference type="PANTHER" id="PTHR30194:SF3">
    <property type="entry name" value="CROSSOVER JUNCTION ENDODEOXYRIBONUCLEASE RUVC"/>
    <property type="match status" value="1"/>
</dbReference>
<dbReference type="Pfam" id="PF02075">
    <property type="entry name" value="RuvC"/>
    <property type="match status" value="1"/>
</dbReference>
<dbReference type="PRINTS" id="PR00696">
    <property type="entry name" value="RSOLVASERUVC"/>
</dbReference>
<dbReference type="SUPFAM" id="SSF53098">
    <property type="entry name" value="Ribonuclease H-like"/>
    <property type="match status" value="1"/>
</dbReference>
<feature type="chain" id="PRO_0000332425" description="Crossover junction endodeoxyribonuclease RuvC">
    <location>
        <begin position="1"/>
        <end position="166"/>
    </location>
</feature>
<feature type="active site" evidence="1">
    <location>
        <position position="11"/>
    </location>
</feature>
<feature type="active site" evidence="1">
    <location>
        <position position="71"/>
    </location>
</feature>
<feature type="active site" evidence="1">
    <location>
        <position position="142"/>
    </location>
</feature>
<feature type="binding site" evidence="1">
    <location>
        <position position="11"/>
    </location>
    <ligand>
        <name>Mg(2+)</name>
        <dbReference type="ChEBI" id="CHEBI:18420"/>
        <label>1</label>
    </ligand>
</feature>
<feature type="binding site" evidence="1">
    <location>
        <position position="71"/>
    </location>
    <ligand>
        <name>Mg(2+)</name>
        <dbReference type="ChEBI" id="CHEBI:18420"/>
        <label>2</label>
    </ligand>
</feature>
<feature type="binding site" evidence="1">
    <location>
        <position position="142"/>
    </location>
    <ligand>
        <name>Mg(2+)</name>
        <dbReference type="ChEBI" id="CHEBI:18420"/>
        <label>1</label>
    </ligand>
</feature>
<gene>
    <name evidence="1" type="primary">ruvC</name>
    <name type="ordered locus">Mmar10_2424</name>
</gene>
<keyword id="KW-0963">Cytoplasm</keyword>
<keyword id="KW-0227">DNA damage</keyword>
<keyword id="KW-0233">DNA recombination</keyword>
<keyword id="KW-0234">DNA repair</keyword>
<keyword id="KW-0238">DNA-binding</keyword>
<keyword id="KW-0255">Endonuclease</keyword>
<keyword id="KW-0378">Hydrolase</keyword>
<keyword id="KW-0460">Magnesium</keyword>
<keyword id="KW-0479">Metal-binding</keyword>
<keyword id="KW-0540">Nuclease</keyword>
<keyword id="KW-1185">Reference proteome</keyword>
<sequence length="166" mass="16890">MALSVRILGIDPGLRRMGWGVIRVEGSRLSAIAHGVVTPPTAAPLSERLMHLFNSVGDLVRQHGPDEAAIEEAFMAANAASALKLGHARAAAMLAPARAGLPVAEYAARLVKKSVVGTGAADKAQVAAMVGILLPGTKATADAADALAIAICHAHHRRATSLGSAA</sequence>